<evidence type="ECO:0000255" key="1">
    <source>
        <dbReference type="HAMAP-Rule" id="MF_00254"/>
    </source>
</evidence>
<gene>
    <name evidence="1" type="primary">glyQ</name>
    <name type="ordered locus">Oant_0521</name>
</gene>
<comment type="catalytic activity">
    <reaction evidence="1">
        <text>tRNA(Gly) + glycine + ATP = glycyl-tRNA(Gly) + AMP + diphosphate</text>
        <dbReference type="Rhea" id="RHEA:16013"/>
        <dbReference type="Rhea" id="RHEA-COMP:9664"/>
        <dbReference type="Rhea" id="RHEA-COMP:9683"/>
        <dbReference type="ChEBI" id="CHEBI:30616"/>
        <dbReference type="ChEBI" id="CHEBI:33019"/>
        <dbReference type="ChEBI" id="CHEBI:57305"/>
        <dbReference type="ChEBI" id="CHEBI:78442"/>
        <dbReference type="ChEBI" id="CHEBI:78522"/>
        <dbReference type="ChEBI" id="CHEBI:456215"/>
        <dbReference type="EC" id="6.1.1.14"/>
    </reaction>
</comment>
<comment type="subunit">
    <text evidence="1">Tetramer of two alpha and two beta subunits.</text>
</comment>
<comment type="subcellular location">
    <subcellularLocation>
        <location evidence="1">Cytoplasm</location>
    </subcellularLocation>
</comment>
<comment type="similarity">
    <text evidence="1">Belongs to the class-II aminoacyl-tRNA synthetase family.</text>
</comment>
<feature type="chain" id="PRO_1000047453" description="Glycine--tRNA ligase alpha subunit">
    <location>
        <begin position="1"/>
        <end position="311"/>
    </location>
</feature>
<protein>
    <recommendedName>
        <fullName evidence="1">Glycine--tRNA ligase alpha subunit</fullName>
        <ecNumber evidence="1">6.1.1.14</ecNumber>
    </recommendedName>
    <alternativeName>
        <fullName evidence="1">Glycyl-tRNA synthetase alpha subunit</fullName>
        <shortName evidence="1">GlyRS</shortName>
    </alternativeName>
</protein>
<reference key="1">
    <citation type="journal article" date="2011" name="J. Bacteriol.">
        <title>Genome of Ochrobactrum anthropi ATCC 49188 T, a versatile opportunistic pathogen and symbiont of several eukaryotic hosts.</title>
        <authorList>
            <person name="Chain P.S."/>
            <person name="Lang D.M."/>
            <person name="Comerci D.J."/>
            <person name="Malfatti S.A."/>
            <person name="Vergez L.M."/>
            <person name="Shin M."/>
            <person name="Ugalde R.A."/>
            <person name="Garcia E."/>
            <person name="Tolmasky M.E."/>
        </authorList>
    </citation>
    <scope>NUCLEOTIDE SEQUENCE [LARGE SCALE GENOMIC DNA]</scope>
    <source>
        <strain>ATCC 49188 / DSM 6882 / CCUG 24695 / JCM 21032 / LMG 3331 / NBRC 15819 / NCTC 12168 / Alc 37</strain>
    </source>
</reference>
<name>SYGA_BRUA4</name>
<keyword id="KW-0030">Aminoacyl-tRNA synthetase</keyword>
<keyword id="KW-0067">ATP-binding</keyword>
<keyword id="KW-0963">Cytoplasm</keyword>
<keyword id="KW-0436">Ligase</keyword>
<keyword id="KW-0547">Nucleotide-binding</keyword>
<keyword id="KW-0648">Protein biosynthesis</keyword>
<keyword id="KW-1185">Reference proteome</keyword>
<organism>
    <name type="scientific">Brucella anthropi (strain ATCC 49188 / DSM 6882 / CCUG 24695 / JCM 21032 / LMG 3331 / NBRC 15819 / NCTC 12168 / Alc 37)</name>
    <name type="common">Ochrobactrum anthropi</name>
    <dbReference type="NCBI Taxonomy" id="439375"/>
    <lineage>
        <taxon>Bacteria</taxon>
        <taxon>Pseudomonadati</taxon>
        <taxon>Pseudomonadota</taxon>
        <taxon>Alphaproteobacteria</taxon>
        <taxon>Hyphomicrobiales</taxon>
        <taxon>Brucellaceae</taxon>
        <taxon>Brucella/Ochrobactrum group</taxon>
        <taxon>Brucella</taxon>
    </lineage>
</organism>
<proteinExistence type="inferred from homology"/>
<sequence length="311" mass="35336">MHPTRSFQGLILTLHNYWAEHGCAILQPYDMEVGAGTFHPATTLRSLGPKPWKAAYVQPSRRPKDGRYGENPNRLQHYYQYQVIIKPSPPNLQDLYLGSLRAIGLDPTLHDVRFVEDDWESPTLGAWGLGWECWCDGMEVSQFTYFQQVCGIECSPVSGELTYGLERLAMYVQGVDNVYDLNFNGLEGDEKVTYGEVFLQAEQEYSRYNFEMANTEALRQHFIDAERECEAILKAGAPGPNANHQMHKSVFPAYDQCIKASHVFNLMDARGVISVTERQSYILRVRNLARQCGEAFLLTDAGGFNFKREGE</sequence>
<accession>A6WW98</accession>
<dbReference type="EC" id="6.1.1.14" evidence="1"/>
<dbReference type="EMBL" id="CP000758">
    <property type="protein sequence ID" value="ABS13252.1"/>
    <property type="molecule type" value="Genomic_DNA"/>
</dbReference>
<dbReference type="RefSeq" id="WP_012090798.1">
    <property type="nucleotide sequence ID" value="NC_009667.1"/>
</dbReference>
<dbReference type="SMR" id="A6WW98"/>
<dbReference type="STRING" id="439375.Oant_0521"/>
<dbReference type="KEGG" id="oan:Oant_0521"/>
<dbReference type="PATRIC" id="fig|439375.7.peg.557"/>
<dbReference type="eggNOG" id="COG0752">
    <property type="taxonomic scope" value="Bacteria"/>
</dbReference>
<dbReference type="HOGENOM" id="CLU_057066_1_0_5"/>
<dbReference type="Proteomes" id="UP000002301">
    <property type="component" value="Chromosome 1"/>
</dbReference>
<dbReference type="GO" id="GO:0005829">
    <property type="term" value="C:cytosol"/>
    <property type="evidence" value="ECO:0007669"/>
    <property type="project" value="TreeGrafter"/>
</dbReference>
<dbReference type="GO" id="GO:0005524">
    <property type="term" value="F:ATP binding"/>
    <property type="evidence" value="ECO:0007669"/>
    <property type="project" value="UniProtKB-UniRule"/>
</dbReference>
<dbReference type="GO" id="GO:0004820">
    <property type="term" value="F:glycine-tRNA ligase activity"/>
    <property type="evidence" value="ECO:0007669"/>
    <property type="project" value="UniProtKB-UniRule"/>
</dbReference>
<dbReference type="GO" id="GO:0006426">
    <property type="term" value="P:glycyl-tRNA aminoacylation"/>
    <property type="evidence" value="ECO:0007669"/>
    <property type="project" value="UniProtKB-UniRule"/>
</dbReference>
<dbReference type="CDD" id="cd00733">
    <property type="entry name" value="GlyRS_alpha_core"/>
    <property type="match status" value="1"/>
</dbReference>
<dbReference type="FunFam" id="3.30.930.10:FF:000006">
    <property type="entry name" value="Glycine--tRNA ligase alpha subunit"/>
    <property type="match status" value="1"/>
</dbReference>
<dbReference type="Gene3D" id="3.30.930.10">
    <property type="entry name" value="Bira Bifunctional Protein, Domain 2"/>
    <property type="match status" value="1"/>
</dbReference>
<dbReference type="Gene3D" id="1.20.58.180">
    <property type="entry name" value="Class II aaRS and biotin synthetases, domain 2"/>
    <property type="match status" value="1"/>
</dbReference>
<dbReference type="HAMAP" id="MF_00254">
    <property type="entry name" value="Gly_tRNA_synth_alpha"/>
    <property type="match status" value="1"/>
</dbReference>
<dbReference type="InterPro" id="IPR045864">
    <property type="entry name" value="aa-tRNA-synth_II/BPL/LPL"/>
</dbReference>
<dbReference type="InterPro" id="IPR006194">
    <property type="entry name" value="Gly-tRNA-synth_heterodimer"/>
</dbReference>
<dbReference type="InterPro" id="IPR002310">
    <property type="entry name" value="Gly-tRNA_ligase_asu"/>
</dbReference>
<dbReference type="NCBIfam" id="TIGR00388">
    <property type="entry name" value="glyQ"/>
    <property type="match status" value="1"/>
</dbReference>
<dbReference type="NCBIfam" id="NF006827">
    <property type="entry name" value="PRK09348.1"/>
    <property type="match status" value="1"/>
</dbReference>
<dbReference type="PANTHER" id="PTHR30075:SF2">
    <property type="entry name" value="GLYCINE--TRNA LIGASE, CHLOROPLASTIC_MITOCHONDRIAL 2"/>
    <property type="match status" value="1"/>
</dbReference>
<dbReference type="PANTHER" id="PTHR30075">
    <property type="entry name" value="GLYCYL-TRNA SYNTHETASE"/>
    <property type="match status" value="1"/>
</dbReference>
<dbReference type="Pfam" id="PF02091">
    <property type="entry name" value="tRNA-synt_2e"/>
    <property type="match status" value="1"/>
</dbReference>
<dbReference type="PRINTS" id="PR01044">
    <property type="entry name" value="TRNASYNTHGA"/>
</dbReference>
<dbReference type="SUPFAM" id="SSF55681">
    <property type="entry name" value="Class II aaRS and biotin synthetases"/>
    <property type="match status" value="1"/>
</dbReference>
<dbReference type="PROSITE" id="PS50861">
    <property type="entry name" value="AA_TRNA_LIGASE_II_GLYAB"/>
    <property type="match status" value="1"/>
</dbReference>